<organism evidence="8">
    <name type="scientific">Caenorhabditis elegans</name>
    <dbReference type="NCBI Taxonomy" id="6239"/>
    <lineage>
        <taxon>Eukaryota</taxon>
        <taxon>Metazoa</taxon>
        <taxon>Ecdysozoa</taxon>
        <taxon>Nematoda</taxon>
        <taxon>Chromadorea</taxon>
        <taxon>Rhabditida</taxon>
        <taxon>Rhabditina</taxon>
        <taxon>Rhabditomorpha</taxon>
        <taxon>Rhabditoidea</taxon>
        <taxon>Rhabditidae</taxon>
        <taxon>Peloderinae</taxon>
        <taxon>Caenorhabditis</taxon>
    </lineage>
</organism>
<proteinExistence type="evidence at protein level"/>
<protein>
    <recommendedName>
        <fullName evidence="7">Synaptonemal complex protein 3</fullName>
    </recommendedName>
</protein>
<comment type="function">
    <text evidence="2 3 4">Plays a role in early meiotic events; during prophase I contributes to synaptonemal complex (SC) assembly, synapsis and chiasmata formation and stabilization of homologous chromosomes pairing (PubMed:17565948). Required for restricting SC assembly to bridge paired chromosome axes (PubMed:17565963). Required for the timely progression of meiotic crossover recombination (PubMed:17565963). Required for the synapsis checkpoint (PubMed:27605049).</text>
</comment>
<comment type="subunit">
    <text evidence="5 6">Interacts with gras-1 (PubMed:36809245). Interacts with brc-1 and brd-1 (PubMed:30383754).</text>
</comment>
<comment type="subcellular location">
    <subcellularLocation>
        <location evidence="2">Chromosome</location>
    </subcellularLocation>
    <text evidence="2">Upon entrance into pachytene, localizes continuously at the interface between paired and aligned homologous chromosomes (PubMed:17565948). As nuclei progress through late prophase, chromosomal association is progressively reduced (PubMed:17565948).</text>
</comment>
<comment type="disruption phenotype">
    <text evidence="2 3">Elevated levels of embryonic lethality and increased frequency of male progeny (PubMed:17565948). Chromosome segregation defects (PubMed:17565948). Lack of syp-1 and syp-2 proteins in meiotic nuclei (PubMed:17565948). Impaired homologous chromosome pairing (PubMed:17565948). Lack of chiasmata (PubMed:17565948). Increased levels of germ cell apoptosis (PubMed:17565963).</text>
</comment>
<feature type="chain" id="PRO_0000458925" description="Synaptonemal complex protein 3">
    <location>
        <begin position="1"/>
        <end position="224"/>
    </location>
</feature>
<feature type="coiled-coil region" evidence="1">
    <location>
        <begin position="63"/>
        <end position="97"/>
    </location>
</feature>
<feature type="coiled-coil region" evidence="1">
    <location>
        <begin position="137"/>
        <end position="171"/>
    </location>
</feature>
<feature type="mutagenesis site" description="In me42; results in elevated levels of embryonic lethality, increased frequency of male progeny, chromosome segregation defects, lack of chiasmata and impaired homologous chromosome pairing." evidence="2">
    <location>
        <begin position="214"/>
        <end position="224"/>
    </location>
</feature>
<gene>
    <name evidence="9" type="primary">syp-3</name>
    <name evidence="9" type="ORF">F39H2.4</name>
</gene>
<dbReference type="EMBL" id="BX284601">
    <property type="protein sequence ID" value="CAB03087.2"/>
    <property type="molecule type" value="Genomic_DNA"/>
</dbReference>
<dbReference type="PIR" id="T22007">
    <property type="entry name" value="T22007"/>
</dbReference>
<dbReference type="RefSeq" id="NP_492345.2">
    <property type="nucleotide sequence ID" value="NM_059944.9"/>
</dbReference>
<dbReference type="SMR" id="O62238"/>
<dbReference type="ComplexPortal" id="CPX-3388">
    <property type="entry name" value="Synaptonemal complex"/>
</dbReference>
<dbReference type="DIP" id="DIP-25551N"/>
<dbReference type="FunCoup" id="O62238">
    <property type="interactions" value="21"/>
</dbReference>
<dbReference type="IntAct" id="O62238">
    <property type="interactions" value="4"/>
</dbReference>
<dbReference type="STRING" id="6239.F39H2.4.2"/>
<dbReference type="PaxDb" id="6239-F39H2.4"/>
<dbReference type="PeptideAtlas" id="O62238"/>
<dbReference type="EnsemblMetazoa" id="F39H2.4.1">
    <property type="protein sequence ID" value="F39H2.4.1"/>
    <property type="gene ID" value="WBGene00006377"/>
</dbReference>
<dbReference type="EnsemblMetazoa" id="F39H2.4.2">
    <property type="protein sequence ID" value="F39H2.4.2"/>
    <property type="gene ID" value="WBGene00006377"/>
</dbReference>
<dbReference type="GeneID" id="172667"/>
<dbReference type="KEGG" id="cel:CELE_F39H2.4"/>
<dbReference type="UCSC" id="F39H2.4">
    <property type="organism name" value="c. elegans"/>
</dbReference>
<dbReference type="AGR" id="WB:WBGene00006377"/>
<dbReference type="CTD" id="172667"/>
<dbReference type="WormBase" id="F39H2.4">
    <property type="protein sequence ID" value="CE41238"/>
    <property type="gene ID" value="WBGene00006377"/>
    <property type="gene designation" value="syp-3"/>
</dbReference>
<dbReference type="eggNOG" id="ENOG502T73X">
    <property type="taxonomic scope" value="Eukaryota"/>
</dbReference>
<dbReference type="HOGENOM" id="CLU_1225782_0_0_1"/>
<dbReference type="InParanoid" id="O62238"/>
<dbReference type="OMA" id="VTYKERN"/>
<dbReference type="OrthoDB" id="5828780at2759"/>
<dbReference type="PhylomeDB" id="O62238"/>
<dbReference type="PRO" id="PR:O62238"/>
<dbReference type="Proteomes" id="UP000001940">
    <property type="component" value="Chromosome I"/>
</dbReference>
<dbReference type="Bgee" id="WBGene00006377">
    <property type="expression patterns" value="Expressed in germ line (C elegans) and 4 other cell types or tissues"/>
</dbReference>
<dbReference type="GO" id="GO:0000801">
    <property type="term" value="C:central element"/>
    <property type="evidence" value="ECO:0000314"/>
    <property type="project" value="WormBase"/>
</dbReference>
<dbReference type="GO" id="GO:0005694">
    <property type="term" value="C:chromosome"/>
    <property type="evidence" value="ECO:0000303"/>
    <property type="project" value="ComplexPortal"/>
</dbReference>
<dbReference type="GO" id="GO:0000800">
    <property type="term" value="C:lateral element"/>
    <property type="evidence" value="ECO:0000314"/>
    <property type="project" value="WormBase"/>
</dbReference>
<dbReference type="GO" id="GO:0000795">
    <property type="term" value="C:synaptonemal complex"/>
    <property type="evidence" value="ECO:0000303"/>
    <property type="project" value="ComplexPortal"/>
</dbReference>
<dbReference type="GO" id="GO:0051026">
    <property type="term" value="P:chiasma assembly"/>
    <property type="evidence" value="ECO:0000315"/>
    <property type="project" value="WormBase"/>
</dbReference>
<dbReference type="GO" id="GO:0009792">
    <property type="term" value="P:embryo development ending in birth or egg hatching"/>
    <property type="evidence" value="ECO:0000315"/>
    <property type="project" value="WormBase"/>
</dbReference>
<dbReference type="GO" id="GO:0007129">
    <property type="term" value="P:homologous chromosome pairing at meiosis"/>
    <property type="evidence" value="ECO:0000303"/>
    <property type="project" value="ComplexPortal"/>
</dbReference>
<dbReference type="GO" id="GO:0045132">
    <property type="term" value="P:meiotic chromosome segregation"/>
    <property type="evidence" value="ECO:0000315"/>
    <property type="project" value="WormBase"/>
</dbReference>
<dbReference type="GO" id="GO:0007131">
    <property type="term" value="P:reciprocal meiotic recombination"/>
    <property type="evidence" value="ECO:0000303"/>
    <property type="project" value="ComplexPortal"/>
</dbReference>
<dbReference type="GO" id="GO:0007130">
    <property type="term" value="P:synaptonemal complex assembly"/>
    <property type="evidence" value="ECO:0000315"/>
    <property type="project" value="WormBase"/>
</dbReference>
<accession>O62238</accession>
<sequence>MNFEKLVSQAVNGDRFKIFCGQLTEFTNSLAGEREAIEKGMRQIETQQLEAETSFTERIAEDRVKCAAQRESLERQLQDLTATDNKLSEQKRDWEERQEKAYDELMSYLENEDVDSAGTQFGDHFNSLIKSMNNLSHDSMNGQFNSLKNNLDELNIEKKQLEVAIADQSSTISEMIPSLRPTCGATYKERNTLRIIFHYQVAKLRSEYQKCRLQEEALKARLST</sequence>
<name>SYP3_CAEEL</name>
<reference evidence="8" key="1">
    <citation type="journal article" date="1998" name="Science">
        <title>Genome sequence of the nematode C. elegans: a platform for investigating biology.</title>
        <authorList>
            <consortium name="The C. elegans sequencing consortium"/>
        </authorList>
    </citation>
    <scope>NUCLEOTIDE SEQUENCE [LARGE SCALE GENOMIC DNA]</scope>
    <source>
        <strain evidence="8">Bristol N2</strain>
    </source>
</reference>
<reference evidence="7" key="2">
    <citation type="journal article" date="2007" name="Genetics">
        <title>SYP-3 restricts synaptonemal complex assembly to bridge paired chromosome axes during meiosis in Caenorhabditis elegans.</title>
        <authorList>
            <person name="Smolikov S."/>
            <person name="Eizinger A."/>
            <person name="Schild-Prufert K."/>
            <person name="Hurlburt A."/>
            <person name="McDonald K."/>
            <person name="Engebrecht J."/>
            <person name="Villeneuve A.M."/>
            <person name="Colaiacovo M.P."/>
        </authorList>
    </citation>
    <scope>FUNCTION</scope>
    <scope>SUBCELLULAR LOCATION</scope>
    <scope>DISRUPTION PHENOTYPE</scope>
    <scope>MUTAGENESIS OF 214-GLN--THR-224</scope>
</reference>
<reference evidence="7" key="3">
    <citation type="journal article" date="2007" name="Genetics">
        <title>Synapsis-defective mutants reveal a correlation between chromosome conformation and the mode of double-strand break repair during Caenorhabditis elegans meiosis.</title>
        <authorList>
            <person name="Smolikov S."/>
            <person name="Eizinger A."/>
            <person name="Hurlburt A."/>
            <person name="Rogers E."/>
            <person name="Villeneuve A.M."/>
            <person name="Colaiacovo M.P."/>
        </authorList>
    </citation>
    <scope>FUNCTION</scope>
    <scope>DISRUPTION PHENOTYPE</scope>
</reference>
<reference evidence="7" key="4">
    <citation type="journal article" date="2016" name="Genetics">
        <title>Synaptonemal Complex Components Are Required for Meiotic Checkpoint Function in Caenorhabditis elegans.</title>
        <authorList>
            <person name="Bohr T."/>
            <person name="Ashley G."/>
            <person name="Eggleston E."/>
            <person name="Firestone K."/>
            <person name="Bhalla N."/>
        </authorList>
    </citation>
    <scope>FUNCTION</scope>
</reference>
<reference evidence="7" key="5">
    <citation type="journal article" date="2018" name="PLoS Genet.">
        <title>BRCA1-BARD1 associate with the synaptonemal complex and pro-crossover factors and influence RAD-51 dynamics during Caenorhabditis elegans meiosis.</title>
        <authorList>
            <person name="Janisiw E."/>
            <person name="Dello Stritto M.R."/>
            <person name="Jantsch V."/>
            <person name="Silva N."/>
        </authorList>
    </citation>
    <scope>INTERACTION WITH BRC-1 AND BRD-1</scope>
</reference>
<reference evidence="7" key="6">
    <citation type="journal article" date="2023" name="PLoS Genet.">
        <title>GRAS-1 is a novel regulator of early meiotic chromosome dynamics in C. elegans.</title>
        <authorList>
            <person name="Martinez-Garcia M."/>
            <person name="Naharro P.R."/>
            <person name="Skinner M.W."/>
            <person name="Baran K.A."/>
            <person name="Lascarez-Lagunas L.I."/>
            <person name="Nadarajan S."/>
            <person name="Shin N."/>
            <person name="Silva-Garcia C.G."/>
            <person name="Saito T.T."/>
            <person name="Beese-Sims S."/>
            <person name="Diaz-Pacheco B.N."/>
            <person name="Berson E."/>
            <person name="Castaner A.B."/>
            <person name="Pacheco S."/>
            <person name="Martinez-Perez E."/>
            <person name="Jordan P.W."/>
            <person name="Colaiacovo M.P."/>
        </authorList>
    </citation>
    <scope>INTERACTION WITH GRAS-1</scope>
</reference>
<keyword id="KW-0158">Chromosome</keyword>
<keyword id="KW-0175">Coiled coil</keyword>
<keyword id="KW-0469">Meiosis</keyword>
<keyword id="KW-1185">Reference proteome</keyword>
<evidence type="ECO:0000255" key="1"/>
<evidence type="ECO:0000269" key="2">
    <source>
    </source>
</evidence>
<evidence type="ECO:0000269" key="3">
    <source>
    </source>
</evidence>
<evidence type="ECO:0000269" key="4">
    <source>
    </source>
</evidence>
<evidence type="ECO:0000269" key="5">
    <source>
    </source>
</evidence>
<evidence type="ECO:0000269" key="6">
    <source>
    </source>
</evidence>
<evidence type="ECO:0000305" key="7"/>
<evidence type="ECO:0000312" key="8">
    <source>
        <dbReference type="Proteomes" id="UP000001940"/>
    </source>
</evidence>
<evidence type="ECO:0000312" key="9">
    <source>
        <dbReference type="WormBase" id="F39H2.4"/>
    </source>
</evidence>